<feature type="transit peptide" description="Mitochondrion" evidence="2">
    <location>
        <begin position="1"/>
        <end status="unknown"/>
    </location>
</feature>
<feature type="chain" id="PRO_0000240142" description="Large ribosomal subunit protein bL19m">
    <location>
        <begin status="unknown"/>
        <end position="292"/>
    </location>
</feature>
<feature type="region of interest" description="Disordered" evidence="3">
    <location>
        <begin position="39"/>
        <end position="68"/>
    </location>
</feature>
<feature type="modified residue" description="Phosphoserine" evidence="1">
    <location>
        <position position="77"/>
    </location>
</feature>
<name>RM19_BOVIN</name>
<keyword id="KW-0002">3D-structure</keyword>
<keyword id="KW-0496">Mitochondrion</keyword>
<keyword id="KW-0597">Phosphoprotein</keyword>
<keyword id="KW-1185">Reference proteome</keyword>
<keyword id="KW-0687">Ribonucleoprotein</keyword>
<keyword id="KW-0689">Ribosomal protein</keyword>
<keyword id="KW-0809">Transit peptide</keyword>
<gene>
    <name type="primary">MRPL19</name>
</gene>
<organism>
    <name type="scientific">Bos taurus</name>
    <name type="common">Bovine</name>
    <dbReference type="NCBI Taxonomy" id="9913"/>
    <lineage>
        <taxon>Eukaryota</taxon>
        <taxon>Metazoa</taxon>
        <taxon>Chordata</taxon>
        <taxon>Craniata</taxon>
        <taxon>Vertebrata</taxon>
        <taxon>Euteleostomi</taxon>
        <taxon>Mammalia</taxon>
        <taxon>Eutheria</taxon>
        <taxon>Laurasiatheria</taxon>
        <taxon>Artiodactyla</taxon>
        <taxon>Ruminantia</taxon>
        <taxon>Pecora</taxon>
        <taxon>Bovidae</taxon>
        <taxon>Bovinae</taxon>
        <taxon>Bos</taxon>
    </lineage>
</organism>
<protein>
    <recommendedName>
        <fullName evidence="4">Large ribosomal subunit protein bL19m</fullName>
    </recommendedName>
    <alternativeName>
        <fullName>39S ribosomal protein L19, mitochondrial</fullName>
        <shortName>L19mt</shortName>
        <shortName>MRP-L19</shortName>
    </alternativeName>
</protein>
<evidence type="ECO:0000250" key="1">
    <source>
        <dbReference type="UniProtKB" id="P49406"/>
    </source>
</evidence>
<evidence type="ECO:0000255" key="2"/>
<evidence type="ECO:0000256" key="3">
    <source>
        <dbReference type="SAM" id="MobiDB-lite"/>
    </source>
</evidence>
<evidence type="ECO:0000305" key="4"/>
<dbReference type="EMBL" id="BC105368">
    <property type="protein sequence ID" value="AAI05369.1"/>
    <property type="molecule type" value="mRNA"/>
</dbReference>
<dbReference type="RefSeq" id="NP_001039533.1">
    <property type="nucleotide sequence ID" value="NM_001046068.2"/>
</dbReference>
<dbReference type="PDB" id="2FTC">
    <property type="method" value="EM"/>
    <property type="resolution" value="12.10 A"/>
    <property type="chains" value="K=108-205"/>
</dbReference>
<dbReference type="PDBsum" id="2FTC"/>
<dbReference type="SMR" id="Q2HJI0"/>
<dbReference type="FunCoup" id="Q2HJI0">
    <property type="interactions" value="2325"/>
</dbReference>
<dbReference type="STRING" id="9913.ENSBTAP00000003312"/>
<dbReference type="PaxDb" id="9913-ENSBTAP00000003312"/>
<dbReference type="GeneID" id="510957"/>
<dbReference type="KEGG" id="bta:510957"/>
<dbReference type="CTD" id="9801"/>
<dbReference type="eggNOG" id="KOG1698">
    <property type="taxonomic scope" value="Eukaryota"/>
</dbReference>
<dbReference type="InParanoid" id="Q2HJI0"/>
<dbReference type="OrthoDB" id="432645at2759"/>
<dbReference type="EvolutionaryTrace" id="Q2HJI0"/>
<dbReference type="Proteomes" id="UP000009136">
    <property type="component" value="Unplaced"/>
</dbReference>
<dbReference type="GO" id="GO:0005743">
    <property type="term" value="C:mitochondrial inner membrane"/>
    <property type="evidence" value="ECO:0000304"/>
    <property type="project" value="Reactome"/>
</dbReference>
<dbReference type="GO" id="GO:0005762">
    <property type="term" value="C:mitochondrial large ribosomal subunit"/>
    <property type="evidence" value="ECO:0000250"/>
    <property type="project" value="UniProtKB"/>
</dbReference>
<dbReference type="GO" id="GO:0003735">
    <property type="term" value="F:structural constituent of ribosome"/>
    <property type="evidence" value="ECO:0000318"/>
    <property type="project" value="GO_Central"/>
</dbReference>
<dbReference type="GO" id="GO:0006412">
    <property type="term" value="P:translation"/>
    <property type="evidence" value="ECO:0007669"/>
    <property type="project" value="InterPro"/>
</dbReference>
<dbReference type="FunFam" id="2.30.30.790:FF:000002">
    <property type="entry name" value="39S ribosomal protein L19, mitochondrial"/>
    <property type="match status" value="1"/>
</dbReference>
<dbReference type="Gene3D" id="2.30.30.790">
    <property type="match status" value="1"/>
</dbReference>
<dbReference type="InterPro" id="IPR001857">
    <property type="entry name" value="Ribosomal_bL19"/>
</dbReference>
<dbReference type="InterPro" id="IPR038657">
    <property type="entry name" value="Ribosomal_bL19_sf"/>
</dbReference>
<dbReference type="InterPro" id="IPR008991">
    <property type="entry name" value="Translation_prot_SH3-like_sf"/>
</dbReference>
<dbReference type="PANTHER" id="PTHR15680:SF9">
    <property type="entry name" value="LARGE RIBOSOMAL SUBUNIT PROTEIN BL19M"/>
    <property type="match status" value="1"/>
</dbReference>
<dbReference type="PANTHER" id="PTHR15680">
    <property type="entry name" value="RIBOSOMAL PROTEIN L19"/>
    <property type="match status" value="1"/>
</dbReference>
<dbReference type="Pfam" id="PF01245">
    <property type="entry name" value="Ribosomal_L19"/>
    <property type="match status" value="1"/>
</dbReference>
<dbReference type="PRINTS" id="PR00061">
    <property type="entry name" value="RIBOSOMALL19"/>
</dbReference>
<dbReference type="SUPFAM" id="SSF50104">
    <property type="entry name" value="Translation proteins SH3-like domain"/>
    <property type="match status" value="1"/>
</dbReference>
<sequence length="292" mass="33335">MAASIARGCQAAKGLGPSFRSARALLPVSTSVASRVLAGPGRRQITGPSEPGVFQPPPKPVIVDKRGPQRRESRFLSPEFIPPRGRTNPLKFQIERKDMLERRKILHIPEFYVGSILRVTTADPYANGKTSQFLGICIQRSGKGLGATFILRNTIEGQGVEICFELYNPRIQEIQVVKLEKRLDDSLLYLRDALPEYSTFDMNMKPVAQEPSREVPINQLKVKMKPKPWSKRWERPKFNVKGIRFDLCLTEEQMKEAQKWSQPWLEFDMMREYDTSKIETAIWNEIEASKSS</sequence>
<reference key="1">
    <citation type="submission" date="2005-09" db="EMBL/GenBank/DDBJ databases">
        <authorList>
            <consortium name="NIH - Mammalian Gene Collection (MGC) project"/>
        </authorList>
    </citation>
    <scope>NUCLEOTIDE SEQUENCE [LARGE SCALE MRNA]</scope>
    <source>
        <strain>Crossbred X Angus</strain>
        <tissue>Ileum</tissue>
    </source>
</reference>
<reference key="2">
    <citation type="journal article" date="2006" name="J. Mol. Biol.">
        <title>A structural model for the large subunit of the mammalian mitochondrial ribosome.</title>
        <authorList>
            <person name="Mears J.A."/>
            <person name="Sharma M.R."/>
            <person name="Gutell R.R."/>
            <person name="McCook A.S."/>
            <person name="Richardson P.E."/>
            <person name="Caulfield T.R."/>
            <person name="Agrawal R.K."/>
            <person name="Harvey S.C."/>
        </authorList>
    </citation>
    <scope>STRUCTURE BY ELECTRON MICROSCOPY (12.1 ANGSTROMS) OF 108-205</scope>
</reference>
<comment type="subunit">
    <text evidence="1">Component of the mitochondrial ribosome large subunit (39S) which comprises a 16S rRNA and about 50 distinct proteins.</text>
</comment>
<comment type="subcellular location">
    <subcellularLocation>
        <location evidence="1">Mitochondrion</location>
    </subcellularLocation>
</comment>
<comment type="similarity">
    <text evidence="4">Belongs to the bacterial ribosomal protein bL19 family.</text>
</comment>
<proteinExistence type="evidence at protein level"/>
<accession>Q2HJI0</accession>